<accession>P44540</accession>
<feature type="chain" id="PRO_0000068627" description="Uncharacterized HTH-type transcriptional regulator HI_0143">
    <location>
        <begin position="1"/>
        <end position="288"/>
    </location>
</feature>
<feature type="domain" description="HTH rpiR-type" evidence="1">
    <location>
        <begin position="5"/>
        <end position="81"/>
    </location>
</feature>
<feature type="domain" description="SIS" evidence="2">
    <location>
        <begin position="129"/>
        <end position="269"/>
    </location>
</feature>
<feature type="DNA-binding region" description="H-T-H motif" evidence="1">
    <location>
        <begin position="41"/>
        <end position="60"/>
    </location>
</feature>
<protein>
    <recommendedName>
        <fullName>Uncharacterized HTH-type transcriptional regulator HI_0143</fullName>
    </recommendedName>
</protein>
<organism>
    <name type="scientific">Haemophilus influenzae (strain ATCC 51907 / DSM 11121 / KW20 / Rd)</name>
    <dbReference type="NCBI Taxonomy" id="71421"/>
    <lineage>
        <taxon>Bacteria</taxon>
        <taxon>Pseudomonadati</taxon>
        <taxon>Pseudomonadota</taxon>
        <taxon>Gammaproteobacteria</taxon>
        <taxon>Pasteurellales</taxon>
        <taxon>Pasteurellaceae</taxon>
        <taxon>Haemophilus</taxon>
    </lineage>
</organism>
<gene>
    <name type="ordered locus">HI_0143</name>
</gene>
<name>Y143_HAEIN</name>
<sequence>MAKSGNVLNKIGSLYQSLTKSEKKIADTILRSPDLVSQCSLSEIAKHLQVGEATLVRFCRTIGFKGFSEFKLELSIELATKDNQDESILETEIMPSDDSLTIAQKLQTAVANVMEETINLLDLKQLEEVVKVLKKARRIFLFGVGSSGVTAEDAKNKLMRIGFQVDASGNNHFMYMQAALLTSSDVAIGLSHSGYSAETAHTIKIAKQNGATTVALTHSLRSPVTEYADYVLVNGNKQGKLQGDSIGTKIAQLFVLDLIYALLVQGEEDIAAQTKQKTLNVILEQRIK</sequence>
<proteinExistence type="predicted"/>
<evidence type="ECO:0000255" key="1">
    <source>
        <dbReference type="PROSITE-ProRule" id="PRU00390"/>
    </source>
</evidence>
<evidence type="ECO:0000255" key="2">
    <source>
        <dbReference type="PROSITE-ProRule" id="PRU00797"/>
    </source>
</evidence>
<reference key="1">
    <citation type="journal article" date="1995" name="Science">
        <title>Whole-genome random sequencing and assembly of Haemophilus influenzae Rd.</title>
        <authorList>
            <person name="Fleischmann R.D."/>
            <person name="Adams M.D."/>
            <person name="White O."/>
            <person name="Clayton R.A."/>
            <person name="Kirkness E.F."/>
            <person name="Kerlavage A.R."/>
            <person name="Bult C.J."/>
            <person name="Tomb J.-F."/>
            <person name="Dougherty B.A."/>
            <person name="Merrick J.M."/>
            <person name="McKenney K."/>
            <person name="Sutton G.G."/>
            <person name="FitzHugh W."/>
            <person name="Fields C.A."/>
            <person name="Gocayne J.D."/>
            <person name="Scott J.D."/>
            <person name="Shirley R."/>
            <person name="Liu L.-I."/>
            <person name="Glodek A."/>
            <person name="Kelley J.M."/>
            <person name="Weidman J.F."/>
            <person name="Phillips C.A."/>
            <person name="Spriggs T."/>
            <person name="Hedblom E."/>
            <person name="Cotton M.D."/>
            <person name="Utterback T.R."/>
            <person name="Hanna M.C."/>
            <person name="Nguyen D.T."/>
            <person name="Saudek D.M."/>
            <person name="Brandon R.C."/>
            <person name="Fine L.D."/>
            <person name="Fritchman J.L."/>
            <person name="Fuhrmann J.L."/>
            <person name="Geoghagen N.S.M."/>
            <person name="Gnehm C.L."/>
            <person name="McDonald L.A."/>
            <person name="Small K.V."/>
            <person name="Fraser C.M."/>
            <person name="Smith H.O."/>
            <person name="Venter J.C."/>
        </authorList>
    </citation>
    <scope>NUCLEOTIDE SEQUENCE [LARGE SCALE GENOMIC DNA]</scope>
    <source>
        <strain>ATCC 51907 / DSM 11121 / KW20 / Rd</strain>
    </source>
</reference>
<reference key="2">
    <citation type="submission" date="1996-09" db="EMBL/GenBank/DDBJ databases">
        <authorList>
            <person name="White O."/>
            <person name="Clayton R.A."/>
            <person name="Kerlavage A.R."/>
            <person name="Fleischmann R.D."/>
        </authorList>
    </citation>
    <scope>SEQUENCE REVISION</scope>
</reference>
<dbReference type="EMBL" id="L42023">
    <property type="protein sequence ID" value="AAC21815.1"/>
    <property type="molecule type" value="Genomic_DNA"/>
</dbReference>
<dbReference type="RefSeq" id="NP_438312.1">
    <property type="nucleotide sequence ID" value="NC_000907.1"/>
</dbReference>
<dbReference type="SMR" id="P44540"/>
<dbReference type="STRING" id="71421.HI_0143"/>
<dbReference type="EnsemblBacteria" id="AAC21815">
    <property type="protein sequence ID" value="AAC21815"/>
    <property type="gene ID" value="HI_0143"/>
</dbReference>
<dbReference type="KEGG" id="hin:HI_0143"/>
<dbReference type="PATRIC" id="fig|71421.8.peg.145"/>
<dbReference type="eggNOG" id="COG1737">
    <property type="taxonomic scope" value="Bacteria"/>
</dbReference>
<dbReference type="HOGENOM" id="CLU_055769_0_3_6"/>
<dbReference type="OrthoDB" id="370421at2"/>
<dbReference type="PhylomeDB" id="P44540"/>
<dbReference type="BioCyc" id="HINF71421:G1GJ1-155-MONOMER"/>
<dbReference type="Proteomes" id="UP000000579">
    <property type="component" value="Chromosome"/>
</dbReference>
<dbReference type="GO" id="GO:0097367">
    <property type="term" value="F:carbohydrate derivative binding"/>
    <property type="evidence" value="ECO:0007669"/>
    <property type="project" value="InterPro"/>
</dbReference>
<dbReference type="GO" id="GO:0003677">
    <property type="term" value="F:DNA binding"/>
    <property type="evidence" value="ECO:0007669"/>
    <property type="project" value="UniProtKB-KW"/>
</dbReference>
<dbReference type="GO" id="GO:0003700">
    <property type="term" value="F:DNA-binding transcription factor activity"/>
    <property type="evidence" value="ECO:0000318"/>
    <property type="project" value="GO_Central"/>
</dbReference>
<dbReference type="GO" id="GO:1901135">
    <property type="term" value="P:carbohydrate derivative metabolic process"/>
    <property type="evidence" value="ECO:0007669"/>
    <property type="project" value="InterPro"/>
</dbReference>
<dbReference type="GO" id="GO:0006355">
    <property type="term" value="P:regulation of DNA-templated transcription"/>
    <property type="evidence" value="ECO:0000318"/>
    <property type="project" value="GO_Central"/>
</dbReference>
<dbReference type="CDD" id="cd05013">
    <property type="entry name" value="SIS_RpiR"/>
    <property type="match status" value="1"/>
</dbReference>
<dbReference type="Gene3D" id="3.40.50.10490">
    <property type="entry name" value="Glucose-6-phosphate isomerase like protein, domain 1"/>
    <property type="match status" value="1"/>
</dbReference>
<dbReference type="Gene3D" id="1.10.10.10">
    <property type="entry name" value="Winged helix-like DNA-binding domain superfamily/Winged helix DNA-binding domain"/>
    <property type="match status" value="1"/>
</dbReference>
<dbReference type="InterPro" id="IPR009057">
    <property type="entry name" value="Homeodomain-like_sf"/>
</dbReference>
<dbReference type="InterPro" id="IPR000281">
    <property type="entry name" value="HTH_RpiR"/>
</dbReference>
<dbReference type="InterPro" id="IPR047640">
    <property type="entry name" value="RpiR-like"/>
</dbReference>
<dbReference type="InterPro" id="IPR035472">
    <property type="entry name" value="RpiR-like_SIS"/>
</dbReference>
<dbReference type="InterPro" id="IPR001347">
    <property type="entry name" value="SIS_dom"/>
</dbReference>
<dbReference type="InterPro" id="IPR046348">
    <property type="entry name" value="SIS_dom_sf"/>
</dbReference>
<dbReference type="InterPro" id="IPR036388">
    <property type="entry name" value="WH-like_DNA-bd_sf"/>
</dbReference>
<dbReference type="PANTHER" id="PTHR30514">
    <property type="entry name" value="GLUCOKINASE"/>
    <property type="match status" value="1"/>
</dbReference>
<dbReference type="PANTHER" id="PTHR30514:SF9">
    <property type="entry name" value="TRANSCRIPTIONAL REGULATOR"/>
    <property type="match status" value="1"/>
</dbReference>
<dbReference type="Pfam" id="PF01418">
    <property type="entry name" value="HTH_6"/>
    <property type="match status" value="1"/>
</dbReference>
<dbReference type="Pfam" id="PF01380">
    <property type="entry name" value="SIS"/>
    <property type="match status" value="1"/>
</dbReference>
<dbReference type="SUPFAM" id="SSF46689">
    <property type="entry name" value="Homeodomain-like"/>
    <property type="match status" value="1"/>
</dbReference>
<dbReference type="SUPFAM" id="SSF53697">
    <property type="entry name" value="SIS domain"/>
    <property type="match status" value="1"/>
</dbReference>
<dbReference type="PROSITE" id="PS51071">
    <property type="entry name" value="HTH_RPIR"/>
    <property type="match status" value="1"/>
</dbReference>
<dbReference type="PROSITE" id="PS51464">
    <property type="entry name" value="SIS"/>
    <property type="match status" value="1"/>
</dbReference>
<keyword id="KW-0238">DNA-binding</keyword>
<keyword id="KW-1185">Reference proteome</keyword>
<keyword id="KW-0804">Transcription</keyword>
<keyword id="KW-0805">Transcription regulation</keyword>